<dbReference type="EMBL" id="CP000378">
    <property type="protein sequence ID" value="ABF75501.1"/>
    <property type="molecule type" value="Genomic_DNA"/>
</dbReference>
<dbReference type="SMR" id="Q1BY04"/>
<dbReference type="HOGENOM" id="CLU_100590_5_1_4"/>
<dbReference type="GO" id="GO:0005737">
    <property type="term" value="C:cytoplasm"/>
    <property type="evidence" value="ECO:0007669"/>
    <property type="project" value="UniProtKB-ARBA"/>
</dbReference>
<dbReference type="GO" id="GO:0015935">
    <property type="term" value="C:small ribosomal subunit"/>
    <property type="evidence" value="ECO:0007669"/>
    <property type="project" value="TreeGrafter"/>
</dbReference>
<dbReference type="GO" id="GO:0003735">
    <property type="term" value="F:structural constituent of ribosome"/>
    <property type="evidence" value="ECO:0007669"/>
    <property type="project" value="InterPro"/>
</dbReference>
<dbReference type="GO" id="GO:0006412">
    <property type="term" value="P:translation"/>
    <property type="evidence" value="ECO:0007669"/>
    <property type="project" value="UniProtKB-UniRule"/>
</dbReference>
<dbReference type="Gene3D" id="3.30.1320.10">
    <property type="match status" value="1"/>
</dbReference>
<dbReference type="HAMAP" id="MF_00385">
    <property type="entry name" value="Ribosomal_bS16"/>
    <property type="match status" value="1"/>
</dbReference>
<dbReference type="InterPro" id="IPR000307">
    <property type="entry name" value="Ribosomal_bS16"/>
</dbReference>
<dbReference type="InterPro" id="IPR023803">
    <property type="entry name" value="Ribosomal_bS16_dom_sf"/>
</dbReference>
<dbReference type="NCBIfam" id="TIGR00002">
    <property type="entry name" value="S16"/>
    <property type="match status" value="1"/>
</dbReference>
<dbReference type="PANTHER" id="PTHR12919">
    <property type="entry name" value="30S RIBOSOMAL PROTEIN S16"/>
    <property type="match status" value="1"/>
</dbReference>
<dbReference type="PANTHER" id="PTHR12919:SF20">
    <property type="entry name" value="SMALL RIBOSOMAL SUBUNIT PROTEIN BS16M"/>
    <property type="match status" value="1"/>
</dbReference>
<dbReference type="Pfam" id="PF00886">
    <property type="entry name" value="Ribosomal_S16"/>
    <property type="match status" value="1"/>
</dbReference>
<dbReference type="SUPFAM" id="SSF54565">
    <property type="entry name" value="Ribosomal protein S16"/>
    <property type="match status" value="1"/>
</dbReference>
<name>RS16_BURO1</name>
<proteinExistence type="inferred from homology"/>
<keyword id="KW-0687">Ribonucleoprotein</keyword>
<keyword id="KW-0689">Ribosomal protein</keyword>
<reference key="1">
    <citation type="submission" date="2006-05" db="EMBL/GenBank/DDBJ databases">
        <title>Complete sequence of chromosome 1 of Burkholderia cenocepacia AU 1054.</title>
        <authorList>
            <consortium name="US DOE Joint Genome Institute"/>
            <person name="Copeland A."/>
            <person name="Lucas S."/>
            <person name="Lapidus A."/>
            <person name="Barry K."/>
            <person name="Detter J.C."/>
            <person name="Glavina del Rio T."/>
            <person name="Hammon N."/>
            <person name="Israni S."/>
            <person name="Dalin E."/>
            <person name="Tice H."/>
            <person name="Pitluck S."/>
            <person name="Chain P."/>
            <person name="Malfatti S."/>
            <person name="Shin M."/>
            <person name="Vergez L."/>
            <person name="Schmutz J."/>
            <person name="Larimer F."/>
            <person name="Land M."/>
            <person name="Hauser L."/>
            <person name="Kyrpides N."/>
            <person name="Lykidis A."/>
            <person name="LiPuma J.J."/>
            <person name="Konstantinidis K."/>
            <person name="Tiedje J.M."/>
            <person name="Richardson P."/>
        </authorList>
    </citation>
    <scope>NUCLEOTIDE SEQUENCE [LARGE SCALE GENOMIC DNA]</scope>
    <source>
        <strain>AU 1054</strain>
    </source>
</reference>
<feature type="chain" id="PRO_1000049223" description="Small ribosomal subunit protein bS16">
    <location>
        <begin position="1"/>
        <end position="84"/>
    </location>
</feature>
<evidence type="ECO:0000255" key="1">
    <source>
        <dbReference type="HAMAP-Rule" id="MF_00385"/>
    </source>
</evidence>
<evidence type="ECO:0000305" key="2"/>
<gene>
    <name evidence="1" type="primary">rpsP</name>
    <name type="ordered locus">Bcen_0590</name>
</gene>
<protein>
    <recommendedName>
        <fullName evidence="1">Small ribosomal subunit protein bS16</fullName>
    </recommendedName>
    <alternativeName>
        <fullName evidence="2">30S ribosomal protein S16</fullName>
    </alternativeName>
</protein>
<accession>Q1BY04</accession>
<comment type="similarity">
    <text evidence="1">Belongs to the bacterial ribosomal protein bS16 family.</text>
</comment>
<sequence>MVIIRLARGGSKKRPFYNIVATDSRNRRDGRFIERVGFYNPVATKGESLRIAQDRLTYWQGVGAQLSPTVQRLVKEAQKAQPAA</sequence>
<organism>
    <name type="scientific">Burkholderia orbicola (strain AU 1054)</name>
    <dbReference type="NCBI Taxonomy" id="331271"/>
    <lineage>
        <taxon>Bacteria</taxon>
        <taxon>Pseudomonadati</taxon>
        <taxon>Pseudomonadota</taxon>
        <taxon>Betaproteobacteria</taxon>
        <taxon>Burkholderiales</taxon>
        <taxon>Burkholderiaceae</taxon>
        <taxon>Burkholderia</taxon>
        <taxon>Burkholderia cepacia complex</taxon>
        <taxon>Burkholderia orbicola</taxon>
    </lineage>
</organism>